<gene>
    <name evidence="1" type="primary">hslU</name>
    <name type="ordered locus">Mext_0645</name>
</gene>
<name>HSLU_METEP</name>
<accession>A9W0F3</accession>
<keyword id="KW-0067">ATP-binding</keyword>
<keyword id="KW-0143">Chaperone</keyword>
<keyword id="KW-0963">Cytoplasm</keyword>
<keyword id="KW-0547">Nucleotide-binding</keyword>
<keyword id="KW-0346">Stress response</keyword>
<evidence type="ECO:0000255" key="1">
    <source>
        <dbReference type="HAMAP-Rule" id="MF_00249"/>
    </source>
</evidence>
<dbReference type="EMBL" id="CP000908">
    <property type="protein sequence ID" value="ABY29059.1"/>
    <property type="molecule type" value="Genomic_DNA"/>
</dbReference>
<dbReference type="RefSeq" id="WP_012252397.1">
    <property type="nucleotide sequence ID" value="NC_010172.1"/>
</dbReference>
<dbReference type="SMR" id="A9W0F3"/>
<dbReference type="KEGG" id="mex:Mext_0645"/>
<dbReference type="eggNOG" id="COG1220">
    <property type="taxonomic scope" value="Bacteria"/>
</dbReference>
<dbReference type="HOGENOM" id="CLU_033123_0_0_5"/>
<dbReference type="BioCyc" id="MEXT419610:MEXT_RS03190-MONOMER"/>
<dbReference type="GO" id="GO:0009376">
    <property type="term" value="C:HslUV protease complex"/>
    <property type="evidence" value="ECO:0007669"/>
    <property type="project" value="UniProtKB-UniRule"/>
</dbReference>
<dbReference type="GO" id="GO:0005524">
    <property type="term" value="F:ATP binding"/>
    <property type="evidence" value="ECO:0007669"/>
    <property type="project" value="UniProtKB-UniRule"/>
</dbReference>
<dbReference type="GO" id="GO:0016887">
    <property type="term" value="F:ATP hydrolysis activity"/>
    <property type="evidence" value="ECO:0007669"/>
    <property type="project" value="InterPro"/>
</dbReference>
<dbReference type="GO" id="GO:0008233">
    <property type="term" value="F:peptidase activity"/>
    <property type="evidence" value="ECO:0007669"/>
    <property type="project" value="InterPro"/>
</dbReference>
<dbReference type="GO" id="GO:0036402">
    <property type="term" value="F:proteasome-activating activity"/>
    <property type="evidence" value="ECO:0007669"/>
    <property type="project" value="UniProtKB-UniRule"/>
</dbReference>
<dbReference type="GO" id="GO:0043335">
    <property type="term" value="P:protein unfolding"/>
    <property type="evidence" value="ECO:0007669"/>
    <property type="project" value="UniProtKB-UniRule"/>
</dbReference>
<dbReference type="GO" id="GO:0051603">
    <property type="term" value="P:proteolysis involved in protein catabolic process"/>
    <property type="evidence" value="ECO:0007669"/>
    <property type="project" value="TreeGrafter"/>
</dbReference>
<dbReference type="CDD" id="cd19498">
    <property type="entry name" value="RecA-like_HslU"/>
    <property type="match status" value="1"/>
</dbReference>
<dbReference type="FunFam" id="3.40.50.300:FF:000213">
    <property type="entry name" value="ATP-dependent protease ATPase subunit HslU"/>
    <property type="match status" value="1"/>
</dbReference>
<dbReference type="FunFam" id="3.40.50.300:FF:000220">
    <property type="entry name" value="ATP-dependent protease ATPase subunit HslU"/>
    <property type="match status" value="1"/>
</dbReference>
<dbReference type="Gene3D" id="1.10.8.60">
    <property type="match status" value="1"/>
</dbReference>
<dbReference type="Gene3D" id="3.40.50.300">
    <property type="entry name" value="P-loop containing nucleotide triphosphate hydrolases"/>
    <property type="match status" value="2"/>
</dbReference>
<dbReference type="HAMAP" id="MF_00249">
    <property type="entry name" value="HslU"/>
    <property type="match status" value="1"/>
</dbReference>
<dbReference type="InterPro" id="IPR003593">
    <property type="entry name" value="AAA+_ATPase"/>
</dbReference>
<dbReference type="InterPro" id="IPR050052">
    <property type="entry name" value="ATP-dep_Clp_protease_ClpX"/>
</dbReference>
<dbReference type="InterPro" id="IPR003959">
    <property type="entry name" value="ATPase_AAA_core"/>
</dbReference>
<dbReference type="InterPro" id="IPR019489">
    <property type="entry name" value="Clp_ATPase_C"/>
</dbReference>
<dbReference type="InterPro" id="IPR004491">
    <property type="entry name" value="HslU"/>
</dbReference>
<dbReference type="InterPro" id="IPR027417">
    <property type="entry name" value="P-loop_NTPase"/>
</dbReference>
<dbReference type="NCBIfam" id="TIGR00390">
    <property type="entry name" value="hslU"/>
    <property type="match status" value="1"/>
</dbReference>
<dbReference type="NCBIfam" id="NF003544">
    <property type="entry name" value="PRK05201.1"/>
    <property type="match status" value="1"/>
</dbReference>
<dbReference type="PANTHER" id="PTHR48102">
    <property type="entry name" value="ATP-DEPENDENT CLP PROTEASE ATP-BINDING SUBUNIT CLPX-LIKE, MITOCHONDRIAL-RELATED"/>
    <property type="match status" value="1"/>
</dbReference>
<dbReference type="PANTHER" id="PTHR48102:SF3">
    <property type="entry name" value="ATP-DEPENDENT PROTEASE ATPASE SUBUNIT HSLU"/>
    <property type="match status" value="1"/>
</dbReference>
<dbReference type="Pfam" id="PF00004">
    <property type="entry name" value="AAA"/>
    <property type="match status" value="1"/>
</dbReference>
<dbReference type="Pfam" id="PF07724">
    <property type="entry name" value="AAA_2"/>
    <property type="match status" value="1"/>
</dbReference>
<dbReference type="SMART" id="SM00382">
    <property type="entry name" value="AAA"/>
    <property type="match status" value="1"/>
</dbReference>
<dbReference type="SMART" id="SM01086">
    <property type="entry name" value="ClpB_D2-small"/>
    <property type="match status" value="1"/>
</dbReference>
<dbReference type="SUPFAM" id="SSF52540">
    <property type="entry name" value="P-loop containing nucleoside triphosphate hydrolases"/>
    <property type="match status" value="1"/>
</dbReference>
<sequence length="437" mass="47692">MTTFSPREIVSELDRFIVGQKDAKRAVAIALRNRWRRQQLKGPLRDEVAPKNILMIGPTGCGKTEIARRLARLAGAPFLKIEATKFTEVGYVGRDVEQIVRDLVEVGIGLTREEKRKAVKAKAEAAAESRILDALVGPTASQATRESFRKKLRASELDDKEVEIELAPSGSQGLPMFEIPGMPGASMGAINISDMLGKALGGQRGKPRRITVAEAYAPLIAEESDKLVDDDALTREAIREVEDNGIVFLDEIDKICAREGRSGADVSREGVQRDLLPLIEGTTVATKHGPVKTDHILFIASGAFHVSKPSDLLPELQGRLPIRVELQPLTVEDFKQILTATEASLIKQTVALMETEGVTLDFTEDAIDALARVAVEVNGSVENIGARRLQTVLERVIDEISFTATDRSGETVPIDAAYVRDRVEDLAANADLSRFIL</sequence>
<proteinExistence type="inferred from homology"/>
<feature type="chain" id="PRO_1000100955" description="ATP-dependent protease ATPase subunit HslU">
    <location>
        <begin position="1"/>
        <end position="437"/>
    </location>
</feature>
<feature type="binding site" evidence="1">
    <location>
        <position position="18"/>
    </location>
    <ligand>
        <name>ATP</name>
        <dbReference type="ChEBI" id="CHEBI:30616"/>
    </ligand>
</feature>
<feature type="binding site" evidence="1">
    <location>
        <begin position="60"/>
        <end position="65"/>
    </location>
    <ligand>
        <name>ATP</name>
        <dbReference type="ChEBI" id="CHEBI:30616"/>
    </ligand>
</feature>
<feature type="binding site" evidence="1">
    <location>
        <position position="250"/>
    </location>
    <ligand>
        <name>ATP</name>
        <dbReference type="ChEBI" id="CHEBI:30616"/>
    </ligand>
</feature>
<feature type="binding site" evidence="1">
    <location>
        <position position="315"/>
    </location>
    <ligand>
        <name>ATP</name>
        <dbReference type="ChEBI" id="CHEBI:30616"/>
    </ligand>
</feature>
<feature type="binding site" evidence="1">
    <location>
        <position position="387"/>
    </location>
    <ligand>
        <name>ATP</name>
        <dbReference type="ChEBI" id="CHEBI:30616"/>
    </ligand>
</feature>
<reference key="1">
    <citation type="submission" date="2007-12" db="EMBL/GenBank/DDBJ databases">
        <title>Complete sequence of Methylobacterium extorquens PA1.</title>
        <authorList>
            <consortium name="US DOE Joint Genome Institute"/>
            <person name="Copeland A."/>
            <person name="Lucas S."/>
            <person name="Lapidus A."/>
            <person name="Barry K."/>
            <person name="Glavina del Rio T."/>
            <person name="Dalin E."/>
            <person name="Tice H."/>
            <person name="Pitluck S."/>
            <person name="Saunders E."/>
            <person name="Brettin T."/>
            <person name="Bruce D."/>
            <person name="Detter J.C."/>
            <person name="Han C."/>
            <person name="Schmutz J."/>
            <person name="Larimer F."/>
            <person name="Land M."/>
            <person name="Hauser L."/>
            <person name="Kyrpides N."/>
            <person name="Kim E."/>
            <person name="Marx C."/>
            <person name="Richardson P."/>
        </authorList>
    </citation>
    <scope>NUCLEOTIDE SEQUENCE [LARGE SCALE GENOMIC DNA]</scope>
    <source>
        <strain>PA1</strain>
    </source>
</reference>
<protein>
    <recommendedName>
        <fullName evidence="1">ATP-dependent protease ATPase subunit HslU</fullName>
    </recommendedName>
    <alternativeName>
        <fullName evidence="1">Unfoldase HslU</fullName>
    </alternativeName>
</protein>
<organism>
    <name type="scientific">Methylorubrum extorquens (strain PA1)</name>
    <name type="common">Methylobacterium extorquens</name>
    <dbReference type="NCBI Taxonomy" id="419610"/>
    <lineage>
        <taxon>Bacteria</taxon>
        <taxon>Pseudomonadati</taxon>
        <taxon>Pseudomonadota</taxon>
        <taxon>Alphaproteobacteria</taxon>
        <taxon>Hyphomicrobiales</taxon>
        <taxon>Methylobacteriaceae</taxon>
        <taxon>Methylorubrum</taxon>
    </lineage>
</organism>
<comment type="function">
    <text evidence="1">ATPase subunit of a proteasome-like degradation complex; this subunit has chaperone activity. The binding of ATP and its subsequent hydrolysis by HslU are essential for unfolding of protein substrates subsequently hydrolyzed by HslV. HslU recognizes the N-terminal part of its protein substrates and unfolds these before they are guided to HslV for hydrolysis.</text>
</comment>
<comment type="subunit">
    <text evidence="1">A double ring-shaped homohexamer of HslV is capped on each side by a ring-shaped HslU homohexamer. The assembly of the HslU/HslV complex is dependent on binding of ATP.</text>
</comment>
<comment type="subcellular location">
    <subcellularLocation>
        <location evidence="1">Cytoplasm</location>
    </subcellularLocation>
</comment>
<comment type="similarity">
    <text evidence="1">Belongs to the ClpX chaperone family. HslU subfamily.</text>
</comment>